<keyword id="KW-0488">Methylation</keyword>
<keyword id="KW-0687">Ribonucleoprotein</keyword>
<keyword id="KW-0689">Ribosomal protein</keyword>
<keyword id="KW-0694">RNA-binding</keyword>
<keyword id="KW-0699">rRNA-binding</keyword>
<keyword id="KW-0820">tRNA-binding</keyword>
<gene>
    <name evidence="2" type="primary">rpsL</name>
    <name type="ordered locus">ACICU_00815</name>
</gene>
<sequence length="124" mass="13766">MATTNQLIRKGRTTLVEKSKVPALKACPQRRGVCTRVYTTTPKKPNSAMRKVCRVRLTSGFEVSSYIGGEGHNLQEHSVVLIRGGRVKDLPGVRYHTVRGSLDCAGVKDRNQSRSKYGAKRPKK</sequence>
<evidence type="ECO:0000250" key="1"/>
<evidence type="ECO:0000255" key="2">
    <source>
        <dbReference type="HAMAP-Rule" id="MF_00403"/>
    </source>
</evidence>
<evidence type="ECO:0000305" key="3"/>
<accession>B2HUQ2</accession>
<comment type="function">
    <text evidence="2">With S4 and S5 plays an important role in translational accuracy.</text>
</comment>
<comment type="function">
    <text evidence="2">Interacts with and stabilizes bases of the 16S rRNA that are involved in tRNA selection in the A site and with the mRNA backbone. Located at the interface of the 30S and 50S subunits, it traverses the body of the 30S subunit contacting proteins on the other side and probably holding the rRNA structure together. The combined cluster of proteins S8, S12 and S17 appears to hold together the shoulder and platform of the 30S subunit.</text>
</comment>
<comment type="subunit">
    <text evidence="2">Part of the 30S ribosomal subunit. Contacts proteins S8 and S17. May interact with IF1 in the 30S initiation complex.</text>
</comment>
<comment type="similarity">
    <text evidence="2">Belongs to the universal ribosomal protein uS12 family.</text>
</comment>
<dbReference type="EMBL" id="CP000863">
    <property type="protein sequence ID" value="ACC56127.1"/>
    <property type="molecule type" value="Genomic_DNA"/>
</dbReference>
<dbReference type="RefSeq" id="WP_000246374.1">
    <property type="nucleotide sequence ID" value="NZ_CP031380.1"/>
</dbReference>
<dbReference type="SMR" id="B2HUQ2"/>
<dbReference type="GeneID" id="92892795"/>
<dbReference type="KEGG" id="abc:ACICU_00815"/>
<dbReference type="HOGENOM" id="CLU_104295_1_2_6"/>
<dbReference type="Proteomes" id="UP000008839">
    <property type="component" value="Chromosome"/>
</dbReference>
<dbReference type="GO" id="GO:0015935">
    <property type="term" value="C:small ribosomal subunit"/>
    <property type="evidence" value="ECO:0007669"/>
    <property type="project" value="InterPro"/>
</dbReference>
<dbReference type="GO" id="GO:0019843">
    <property type="term" value="F:rRNA binding"/>
    <property type="evidence" value="ECO:0007669"/>
    <property type="project" value="UniProtKB-UniRule"/>
</dbReference>
<dbReference type="GO" id="GO:0003735">
    <property type="term" value="F:structural constituent of ribosome"/>
    <property type="evidence" value="ECO:0007669"/>
    <property type="project" value="InterPro"/>
</dbReference>
<dbReference type="GO" id="GO:0000049">
    <property type="term" value="F:tRNA binding"/>
    <property type="evidence" value="ECO:0007669"/>
    <property type="project" value="UniProtKB-UniRule"/>
</dbReference>
<dbReference type="GO" id="GO:0006412">
    <property type="term" value="P:translation"/>
    <property type="evidence" value="ECO:0007669"/>
    <property type="project" value="UniProtKB-UniRule"/>
</dbReference>
<dbReference type="CDD" id="cd03368">
    <property type="entry name" value="Ribosomal_S12"/>
    <property type="match status" value="1"/>
</dbReference>
<dbReference type="FunFam" id="2.40.50.140:FF:000001">
    <property type="entry name" value="30S ribosomal protein S12"/>
    <property type="match status" value="1"/>
</dbReference>
<dbReference type="Gene3D" id="2.40.50.140">
    <property type="entry name" value="Nucleic acid-binding proteins"/>
    <property type="match status" value="1"/>
</dbReference>
<dbReference type="HAMAP" id="MF_00403_B">
    <property type="entry name" value="Ribosomal_uS12_B"/>
    <property type="match status" value="1"/>
</dbReference>
<dbReference type="InterPro" id="IPR012340">
    <property type="entry name" value="NA-bd_OB-fold"/>
</dbReference>
<dbReference type="InterPro" id="IPR006032">
    <property type="entry name" value="Ribosomal_uS12"/>
</dbReference>
<dbReference type="InterPro" id="IPR005679">
    <property type="entry name" value="Ribosomal_uS12_bac"/>
</dbReference>
<dbReference type="NCBIfam" id="TIGR00981">
    <property type="entry name" value="rpsL_bact"/>
    <property type="match status" value="1"/>
</dbReference>
<dbReference type="PANTHER" id="PTHR11652">
    <property type="entry name" value="30S RIBOSOMAL PROTEIN S12 FAMILY MEMBER"/>
    <property type="match status" value="1"/>
</dbReference>
<dbReference type="Pfam" id="PF00164">
    <property type="entry name" value="Ribosom_S12_S23"/>
    <property type="match status" value="1"/>
</dbReference>
<dbReference type="PIRSF" id="PIRSF002133">
    <property type="entry name" value="Ribosomal_S12/S23"/>
    <property type="match status" value="1"/>
</dbReference>
<dbReference type="PRINTS" id="PR01034">
    <property type="entry name" value="RIBOSOMALS12"/>
</dbReference>
<dbReference type="SUPFAM" id="SSF50249">
    <property type="entry name" value="Nucleic acid-binding proteins"/>
    <property type="match status" value="1"/>
</dbReference>
<dbReference type="PROSITE" id="PS00055">
    <property type="entry name" value="RIBOSOMAL_S12"/>
    <property type="match status" value="1"/>
</dbReference>
<organism>
    <name type="scientific">Acinetobacter baumannii (strain ACICU)</name>
    <dbReference type="NCBI Taxonomy" id="405416"/>
    <lineage>
        <taxon>Bacteria</taxon>
        <taxon>Pseudomonadati</taxon>
        <taxon>Pseudomonadota</taxon>
        <taxon>Gammaproteobacteria</taxon>
        <taxon>Moraxellales</taxon>
        <taxon>Moraxellaceae</taxon>
        <taxon>Acinetobacter</taxon>
        <taxon>Acinetobacter calcoaceticus/baumannii complex</taxon>
    </lineage>
</organism>
<protein>
    <recommendedName>
        <fullName evidence="2">Small ribosomal subunit protein uS12</fullName>
    </recommendedName>
    <alternativeName>
        <fullName evidence="3">30S ribosomal protein S12</fullName>
    </alternativeName>
</protein>
<name>RS12_ACIBC</name>
<proteinExistence type="inferred from homology"/>
<reference key="1">
    <citation type="journal article" date="2008" name="Antimicrob. Agents Chemother.">
        <title>Whole-genome pyrosequencing of an epidemic multidrug-resistant Acinetobacter baumannii strain belonging to the European clone II group.</title>
        <authorList>
            <person name="Iacono M."/>
            <person name="Villa L."/>
            <person name="Fortini D."/>
            <person name="Bordoni R."/>
            <person name="Imperi F."/>
            <person name="Bonnal R.J."/>
            <person name="Sicheritz-Ponten T."/>
            <person name="De Bellis G."/>
            <person name="Visca P."/>
            <person name="Cassone A."/>
            <person name="Carattoli A."/>
        </authorList>
    </citation>
    <scope>NUCLEOTIDE SEQUENCE [LARGE SCALE GENOMIC DNA]</scope>
    <source>
        <strain>ACICU</strain>
    </source>
</reference>
<feature type="chain" id="PRO_1000194105" description="Small ribosomal subunit protein uS12">
    <location>
        <begin position="1"/>
        <end position="124"/>
    </location>
</feature>
<feature type="modified residue" description="3-methylthioaspartic acid" evidence="1">
    <location>
        <position position="89"/>
    </location>
</feature>